<protein>
    <recommendedName>
        <fullName>Uncharacterized MFS-type transporter SPBC409.08</fullName>
    </recommendedName>
</protein>
<keyword id="KW-0472">Membrane</keyword>
<keyword id="KW-1185">Reference proteome</keyword>
<keyword id="KW-0812">Transmembrane</keyword>
<keyword id="KW-1133">Transmembrane helix</keyword>
<keyword id="KW-0813">Transport</keyword>
<reference key="1">
    <citation type="journal article" date="2002" name="Nature">
        <title>The genome sequence of Schizosaccharomyces pombe.</title>
        <authorList>
            <person name="Wood V."/>
            <person name="Gwilliam R."/>
            <person name="Rajandream M.A."/>
            <person name="Lyne M.H."/>
            <person name="Lyne R."/>
            <person name="Stewart A."/>
            <person name="Sgouros J.G."/>
            <person name="Peat N."/>
            <person name="Hayles J."/>
            <person name="Baker S.G."/>
            <person name="Basham D."/>
            <person name="Bowman S."/>
            <person name="Brooks K."/>
            <person name="Brown D."/>
            <person name="Brown S."/>
            <person name="Chillingworth T."/>
            <person name="Churcher C.M."/>
            <person name="Collins M."/>
            <person name="Connor R."/>
            <person name="Cronin A."/>
            <person name="Davis P."/>
            <person name="Feltwell T."/>
            <person name="Fraser A."/>
            <person name="Gentles S."/>
            <person name="Goble A."/>
            <person name="Hamlin N."/>
            <person name="Harris D.E."/>
            <person name="Hidalgo J."/>
            <person name="Hodgson G."/>
            <person name="Holroyd S."/>
            <person name="Hornsby T."/>
            <person name="Howarth S."/>
            <person name="Huckle E.J."/>
            <person name="Hunt S."/>
            <person name="Jagels K."/>
            <person name="James K.D."/>
            <person name="Jones L."/>
            <person name="Jones M."/>
            <person name="Leather S."/>
            <person name="McDonald S."/>
            <person name="McLean J."/>
            <person name="Mooney P."/>
            <person name="Moule S."/>
            <person name="Mungall K.L."/>
            <person name="Murphy L.D."/>
            <person name="Niblett D."/>
            <person name="Odell C."/>
            <person name="Oliver K."/>
            <person name="O'Neil S."/>
            <person name="Pearson D."/>
            <person name="Quail M.A."/>
            <person name="Rabbinowitsch E."/>
            <person name="Rutherford K.M."/>
            <person name="Rutter S."/>
            <person name="Saunders D."/>
            <person name="Seeger K."/>
            <person name="Sharp S."/>
            <person name="Skelton J."/>
            <person name="Simmonds M.N."/>
            <person name="Squares R."/>
            <person name="Squares S."/>
            <person name="Stevens K."/>
            <person name="Taylor K."/>
            <person name="Taylor R.G."/>
            <person name="Tivey A."/>
            <person name="Walsh S.V."/>
            <person name="Warren T."/>
            <person name="Whitehead S."/>
            <person name="Woodward J.R."/>
            <person name="Volckaert G."/>
            <person name="Aert R."/>
            <person name="Robben J."/>
            <person name="Grymonprez B."/>
            <person name="Weltjens I."/>
            <person name="Vanstreels E."/>
            <person name="Rieger M."/>
            <person name="Schaefer M."/>
            <person name="Mueller-Auer S."/>
            <person name="Gabel C."/>
            <person name="Fuchs M."/>
            <person name="Duesterhoeft A."/>
            <person name="Fritzc C."/>
            <person name="Holzer E."/>
            <person name="Moestl D."/>
            <person name="Hilbert H."/>
            <person name="Borzym K."/>
            <person name="Langer I."/>
            <person name="Beck A."/>
            <person name="Lehrach H."/>
            <person name="Reinhardt R."/>
            <person name="Pohl T.M."/>
            <person name="Eger P."/>
            <person name="Zimmermann W."/>
            <person name="Wedler H."/>
            <person name="Wambutt R."/>
            <person name="Purnelle B."/>
            <person name="Goffeau A."/>
            <person name="Cadieu E."/>
            <person name="Dreano S."/>
            <person name="Gloux S."/>
            <person name="Lelaure V."/>
            <person name="Mottier S."/>
            <person name="Galibert F."/>
            <person name="Aves S.J."/>
            <person name="Xiang Z."/>
            <person name="Hunt C."/>
            <person name="Moore K."/>
            <person name="Hurst S.M."/>
            <person name="Lucas M."/>
            <person name="Rochet M."/>
            <person name="Gaillardin C."/>
            <person name="Tallada V.A."/>
            <person name="Garzon A."/>
            <person name="Thode G."/>
            <person name="Daga R.R."/>
            <person name="Cruzado L."/>
            <person name="Jimenez J."/>
            <person name="Sanchez M."/>
            <person name="del Rey F."/>
            <person name="Benito J."/>
            <person name="Dominguez A."/>
            <person name="Revuelta J.L."/>
            <person name="Moreno S."/>
            <person name="Armstrong J."/>
            <person name="Forsburg S.L."/>
            <person name="Cerutti L."/>
            <person name="Lowe T."/>
            <person name="McCombie W.R."/>
            <person name="Paulsen I."/>
            <person name="Potashkin J."/>
            <person name="Shpakovski G.V."/>
            <person name="Ussery D."/>
            <person name="Barrell B.G."/>
            <person name="Nurse P."/>
        </authorList>
    </citation>
    <scope>NUCLEOTIDE SEQUENCE [LARGE SCALE GENOMIC DNA]</scope>
    <source>
        <strain>972 / ATCC 24843</strain>
    </source>
</reference>
<reference key="2">
    <citation type="journal article" date="2014" name="Nat. Struct. Mol. Biol.">
        <title>The translational landscape of fission-yeast meiosis and sporulation.</title>
        <authorList>
            <person name="Duncan C.D."/>
            <person name="Mata J."/>
        </authorList>
    </citation>
    <scope>GENE MODEL REVISION</scope>
</reference>
<accession>Q7Z9I0</accession>
<dbReference type="EMBL" id="CU329671">
    <property type="protein sequence ID" value="CAB52610.2"/>
    <property type="status" value="ALT_SEQ"/>
    <property type="molecule type" value="Genomic_DNA"/>
</dbReference>
<dbReference type="RefSeq" id="NP_595458.1">
    <property type="nucleotide sequence ID" value="NM_001021368.2"/>
</dbReference>
<dbReference type="BioGRID" id="277530">
    <property type="interactions" value="7"/>
</dbReference>
<dbReference type="FunCoup" id="Q7Z9I0">
    <property type="interactions" value="98"/>
</dbReference>
<dbReference type="STRING" id="284812.Q7Z9I0"/>
<dbReference type="TCDB" id="2.A.1.2.108">
    <property type="family name" value="the major facilitator superfamily (mfs)"/>
</dbReference>
<dbReference type="PaxDb" id="4896-SPBC409.08.1"/>
<dbReference type="EnsemblFungi" id="SPBC409.08.1">
    <property type="protein sequence ID" value="SPBC409.08.1:pep"/>
    <property type="gene ID" value="SPBC409.08"/>
</dbReference>
<dbReference type="KEGG" id="spo:2541015"/>
<dbReference type="PomBase" id="SPBC409.08"/>
<dbReference type="eggNOG" id="KOG0255">
    <property type="taxonomic scope" value="Eukaryota"/>
</dbReference>
<dbReference type="HOGENOM" id="CLU_008455_11_5_1"/>
<dbReference type="InParanoid" id="Q7Z9I0"/>
<dbReference type="PRO" id="PR:Q7Z9I0"/>
<dbReference type="Proteomes" id="UP000002485">
    <property type="component" value="Chromosome II"/>
</dbReference>
<dbReference type="GO" id="GO:0000329">
    <property type="term" value="C:fungal-type vacuole membrane"/>
    <property type="evidence" value="ECO:0000318"/>
    <property type="project" value="GO_Central"/>
</dbReference>
<dbReference type="GO" id="GO:0005886">
    <property type="term" value="C:plasma membrane"/>
    <property type="evidence" value="ECO:0000318"/>
    <property type="project" value="GO_Central"/>
</dbReference>
<dbReference type="GO" id="GO:0000297">
    <property type="term" value="F:spermine transmembrane transporter activity"/>
    <property type="evidence" value="ECO:0000318"/>
    <property type="project" value="GO_Central"/>
</dbReference>
<dbReference type="GO" id="GO:0140115">
    <property type="term" value="P:export across plasma membrane"/>
    <property type="evidence" value="ECO:0007669"/>
    <property type="project" value="UniProtKB-ARBA"/>
</dbReference>
<dbReference type="GO" id="GO:1903710">
    <property type="term" value="P:spermine transmembrane transport"/>
    <property type="evidence" value="ECO:0000266"/>
    <property type="project" value="PomBase"/>
</dbReference>
<dbReference type="GO" id="GO:0000296">
    <property type="term" value="P:spermine transport"/>
    <property type="evidence" value="ECO:0000318"/>
    <property type="project" value="GO_Central"/>
</dbReference>
<dbReference type="GO" id="GO:0055085">
    <property type="term" value="P:transmembrane transport"/>
    <property type="evidence" value="ECO:0000318"/>
    <property type="project" value="GO_Central"/>
</dbReference>
<dbReference type="GO" id="GO:0042908">
    <property type="term" value="P:xenobiotic transport"/>
    <property type="evidence" value="ECO:0007669"/>
    <property type="project" value="UniProtKB-ARBA"/>
</dbReference>
<dbReference type="CDD" id="cd17323">
    <property type="entry name" value="MFS_Tpo1_MDR_like"/>
    <property type="match status" value="1"/>
</dbReference>
<dbReference type="FunFam" id="1.20.1250.20:FF:000011">
    <property type="entry name" value="MFS multidrug transporter, putative"/>
    <property type="match status" value="1"/>
</dbReference>
<dbReference type="Gene3D" id="1.20.1250.20">
    <property type="entry name" value="MFS general substrate transporter like domains"/>
    <property type="match status" value="1"/>
</dbReference>
<dbReference type="InterPro" id="IPR011701">
    <property type="entry name" value="MFS"/>
</dbReference>
<dbReference type="InterPro" id="IPR020846">
    <property type="entry name" value="MFS_dom"/>
</dbReference>
<dbReference type="InterPro" id="IPR036259">
    <property type="entry name" value="MFS_trans_sf"/>
</dbReference>
<dbReference type="InterPro" id="IPR005829">
    <property type="entry name" value="Sugar_transporter_CS"/>
</dbReference>
<dbReference type="PANTHER" id="PTHR23502">
    <property type="entry name" value="MAJOR FACILITATOR SUPERFAMILY"/>
    <property type="match status" value="1"/>
</dbReference>
<dbReference type="PANTHER" id="PTHR23502:SF132">
    <property type="entry name" value="POLYAMINE TRANSPORTER 2-RELATED"/>
    <property type="match status" value="1"/>
</dbReference>
<dbReference type="Pfam" id="PF07690">
    <property type="entry name" value="MFS_1"/>
    <property type="match status" value="1"/>
</dbReference>
<dbReference type="SUPFAM" id="SSF103473">
    <property type="entry name" value="MFS general substrate transporter"/>
    <property type="match status" value="1"/>
</dbReference>
<dbReference type="PROSITE" id="PS50850">
    <property type="entry name" value="MFS"/>
    <property type="match status" value="1"/>
</dbReference>
<proteinExistence type="inferred from homology"/>
<name>YHA8_SCHPO</name>
<organism>
    <name type="scientific">Schizosaccharomyces pombe (strain 972 / ATCC 24843)</name>
    <name type="common">Fission yeast</name>
    <dbReference type="NCBI Taxonomy" id="284812"/>
    <lineage>
        <taxon>Eukaryota</taxon>
        <taxon>Fungi</taxon>
        <taxon>Dikarya</taxon>
        <taxon>Ascomycota</taxon>
        <taxon>Taphrinomycotina</taxon>
        <taxon>Schizosaccharomycetes</taxon>
        <taxon>Schizosaccharomycetales</taxon>
        <taxon>Schizosaccharomycetaceae</taxon>
        <taxon>Schizosaccharomyces</taxon>
    </lineage>
</organism>
<gene>
    <name type="ORF">SPBC409.08</name>
</gene>
<sequence length="552" mass="61213">MPLEKTNTHDSTATVEDQEATDNPMHLTQSRMLDLAGNPNRTTSRQSETLFPNGVDLNYPFTTTRGPPDVAEYNLETAEGVYRDPTINEGEEELVTWELNDPENPHNWSRLWKWYITIVNSLLVVCSAFGSSVIAGDLEDVSRDLKVGPEVANLSCSLMVVGFGIGPLVISPLSEMIGRRIVYLVTLMIYIVLQIPCALAPNIACLLIVRFFCGCFGCTPLTLAGGVISDVWETRERGLAIAFFAAGPYAGPTLGPLVGGWIGVGTGDFRWIFWVNMIYMFVMYLTLLPVPETYAPVLLRWRAQRIRKETGRQVFTAQEKQMLSFKEIVQVNLTRPLTLLLTEPILVCISGYIALIYALLYGYFFAYPNVFVKGKGYNEGITGLMFIPILVGVVGALSTTPFLEKQYMAKLDANNGKSVPEWRLVGMCIASPFIPTGLLIFAWTSFPRLIWIGPAFSGAPFGYGMVLFYFSANNYLIDVYQNYCASALAAKTMVRSAGGAAFPLFIDYMMDGMTRQWAFFLLGMVAVAAIPIPFTFYLFGDKIRARSKAAIV</sequence>
<feature type="chain" id="PRO_0000372711" description="Uncharacterized MFS-type transporter SPBC409.08">
    <location>
        <begin position="1"/>
        <end position="552"/>
    </location>
</feature>
<feature type="transmembrane region" description="Helical" evidence="1">
    <location>
        <begin position="116"/>
        <end position="136"/>
    </location>
</feature>
<feature type="transmembrane region" description="Helical" evidence="1">
    <location>
        <begin position="158"/>
        <end position="178"/>
    </location>
</feature>
<feature type="transmembrane region" description="Helical" evidence="1">
    <location>
        <begin position="181"/>
        <end position="201"/>
    </location>
</feature>
<feature type="transmembrane region" description="Helical" evidence="1">
    <location>
        <begin position="203"/>
        <end position="223"/>
    </location>
</feature>
<feature type="transmembrane region" description="Helical" evidence="1">
    <location>
        <begin position="238"/>
        <end position="258"/>
    </location>
</feature>
<feature type="transmembrane region" description="Helical" evidence="1">
    <location>
        <begin position="271"/>
        <end position="291"/>
    </location>
</feature>
<feature type="transmembrane region" description="Helical" evidence="1">
    <location>
        <begin position="345"/>
        <end position="365"/>
    </location>
</feature>
<feature type="transmembrane region" description="Helical" evidence="1">
    <location>
        <begin position="383"/>
        <end position="403"/>
    </location>
</feature>
<feature type="transmembrane region" description="Helical" evidence="1">
    <location>
        <begin position="424"/>
        <end position="444"/>
    </location>
</feature>
<feature type="transmembrane region" description="Helical" evidence="1">
    <location>
        <begin position="450"/>
        <end position="470"/>
    </location>
</feature>
<feature type="transmembrane region" description="Helical" evidence="1">
    <location>
        <begin position="484"/>
        <end position="506"/>
    </location>
</feature>
<feature type="transmembrane region" description="Helical" evidence="1">
    <location>
        <begin position="519"/>
        <end position="539"/>
    </location>
</feature>
<feature type="region of interest" description="Disordered" evidence="2">
    <location>
        <begin position="1"/>
        <end position="59"/>
    </location>
</feature>
<feature type="compositionally biased region" description="Polar residues" evidence="2">
    <location>
        <begin position="39"/>
        <end position="50"/>
    </location>
</feature>
<evidence type="ECO:0000255" key="1"/>
<evidence type="ECO:0000256" key="2">
    <source>
        <dbReference type="SAM" id="MobiDB-lite"/>
    </source>
</evidence>
<evidence type="ECO:0000305" key="3"/>
<comment type="subcellular location">
    <subcellularLocation>
        <location evidence="1">Membrane</location>
        <topology evidence="1">Multi-pass membrane protein</topology>
    </subcellularLocation>
</comment>
<comment type="similarity">
    <text evidence="1">Belongs to the major facilitator superfamily.</text>
</comment>
<comment type="sequence caution" evidence="3">
    <conflict type="erroneous gene model prediction">
        <sequence resource="EMBL-CDS" id="CAB52610"/>
    </conflict>
</comment>